<name>RPOZ_RHILO</name>
<reference key="1">
    <citation type="journal article" date="2000" name="DNA Res.">
        <title>Complete genome structure of the nitrogen-fixing symbiotic bacterium Mesorhizobium loti.</title>
        <authorList>
            <person name="Kaneko T."/>
            <person name="Nakamura Y."/>
            <person name="Sato S."/>
            <person name="Asamizu E."/>
            <person name="Kato T."/>
            <person name="Sasamoto S."/>
            <person name="Watanabe A."/>
            <person name="Idesawa K."/>
            <person name="Ishikawa A."/>
            <person name="Kawashima K."/>
            <person name="Kimura T."/>
            <person name="Kishida Y."/>
            <person name="Kiyokawa C."/>
            <person name="Kohara M."/>
            <person name="Matsumoto M."/>
            <person name="Matsuno A."/>
            <person name="Mochizuki Y."/>
            <person name="Nakayama S."/>
            <person name="Nakazaki N."/>
            <person name="Shimpo S."/>
            <person name="Sugimoto M."/>
            <person name="Takeuchi C."/>
            <person name="Yamada M."/>
            <person name="Tabata S."/>
        </authorList>
    </citation>
    <scope>NUCLEOTIDE SEQUENCE [LARGE SCALE GENOMIC DNA]</scope>
    <source>
        <strain>LMG 29417 / CECT 9101 / MAFF 303099</strain>
    </source>
</reference>
<dbReference type="EC" id="2.7.7.6" evidence="1"/>
<dbReference type="EMBL" id="BA000012">
    <property type="protein sequence ID" value="BAB54150.1"/>
    <property type="molecule type" value="Genomic_DNA"/>
</dbReference>
<dbReference type="RefSeq" id="WP_010915097.1">
    <property type="nucleotide sequence ID" value="NC_002678.2"/>
</dbReference>
<dbReference type="SMR" id="Q985B3"/>
<dbReference type="GeneID" id="66685022"/>
<dbReference type="KEGG" id="mlo:mlr7753"/>
<dbReference type="eggNOG" id="COG1758">
    <property type="taxonomic scope" value="Bacteria"/>
</dbReference>
<dbReference type="HOGENOM" id="CLU_125406_2_0_5"/>
<dbReference type="Proteomes" id="UP000000552">
    <property type="component" value="Chromosome"/>
</dbReference>
<dbReference type="GO" id="GO:0000428">
    <property type="term" value="C:DNA-directed RNA polymerase complex"/>
    <property type="evidence" value="ECO:0007669"/>
    <property type="project" value="UniProtKB-KW"/>
</dbReference>
<dbReference type="GO" id="GO:0003677">
    <property type="term" value="F:DNA binding"/>
    <property type="evidence" value="ECO:0007669"/>
    <property type="project" value="UniProtKB-UniRule"/>
</dbReference>
<dbReference type="GO" id="GO:0003899">
    <property type="term" value="F:DNA-directed RNA polymerase activity"/>
    <property type="evidence" value="ECO:0007669"/>
    <property type="project" value="UniProtKB-UniRule"/>
</dbReference>
<dbReference type="GO" id="GO:0006351">
    <property type="term" value="P:DNA-templated transcription"/>
    <property type="evidence" value="ECO:0007669"/>
    <property type="project" value="UniProtKB-UniRule"/>
</dbReference>
<dbReference type="Gene3D" id="3.90.940.10">
    <property type="match status" value="1"/>
</dbReference>
<dbReference type="HAMAP" id="MF_00366">
    <property type="entry name" value="RNApol_bact_RpoZ"/>
    <property type="match status" value="1"/>
</dbReference>
<dbReference type="InterPro" id="IPR003716">
    <property type="entry name" value="DNA-dir_RNA_pol_omega"/>
</dbReference>
<dbReference type="InterPro" id="IPR006110">
    <property type="entry name" value="Pol_omega/Rpo6/RPB6"/>
</dbReference>
<dbReference type="InterPro" id="IPR036161">
    <property type="entry name" value="RPB6/omega-like_sf"/>
</dbReference>
<dbReference type="NCBIfam" id="TIGR00690">
    <property type="entry name" value="rpoZ"/>
    <property type="match status" value="1"/>
</dbReference>
<dbReference type="PANTHER" id="PTHR34476">
    <property type="entry name" value="DNA-DIRECTED RNA POLYMERASE SUBUNIT OMEGA"/>
    <property type="match status" value="1"/>
</dbReference>
<dbReference type="PANTHER" id="PTHR34476:SF1">
    <property type="entry name" value="DNA-DIRECTED RNA POLYMERASE SUBUNIT OMEGA"/>
    <property type="match status" value="1"/>
</dbReference>
<dbReference type="Pfam" id="PF01192">
    <property type="entry name" value="RNA_pol_Rpb6"/>
    <property type="match status" value="1"/>
</dbReference>
<dbReference type="SMART" id="SM01409">
    <property type="entry name" value="RNA_pol_Rpb6"/>
    <property type="match status" value="1"/>
</dbReference>
<dbReference type="SUPFAM" id="SSF63562">
    <property type="entry name" value="RPB6/omega subunit-like"/>
    <property type="match status" value="1"/>
</dbReference>
<keyword id="KW-0240">DNA-directed RNA polymerase</keyword>
<keyword id="KW-0548">Nucleotidyltransferase</keyword>
<keyword id="KW-0804">Transcription</keyword>
<keyword id="KW-0808">Transferase</keyword>
<comment type="function">
    <text evidence="1">Promotes RNA polymerase assembly. Latches the N- and C-terminal regions of the beta' subunit thereby facilitating its interaction with the beta and alpha subunits.</text>
</comment>
<comment type="catalytic activity">
    <reaction evidence="1">
        <text>RNA(n) + a ribonucleoside 5'-triphosphate = RNA(n+1) + diphosphate</text>
        <dbReference type="Rhea" id="RHEA:21248"/>
        <dbReference type="Rhea" id="RHEA-COMP:14527"/>
        <dbReference type="Rhea" id="RHEA-COMP:17342"/>
        <dbReference type="ChEBI" id="CHEBI:33019"/>
        <dbReference type="ChEBI" id="CHEBI:61557"/>
        <dbReference type="ChEBI" id="CHEBI:140395"/>
        <dbReference type="EC" id="2.7.7.6"/>
    </reaction>
</comment>
<comment type="subunit">
    <text evidence="1">The RNAP catalytic core consists of 2 alpha, 1 beta, 1 beta' and 1 omega subunit. When a sigma factor is associated with the core the holoenzyme is formed, which can initiate transcription.</text>
</comment>
<comment type="similarity">
    <text evidence="1">Belongs to the RNA polymerase subunit omega family.</text>
</comment>
<feature type="chain" id="PRO_0000128967" description="DNA-directed RNA polymerase subunit omega">
    <location>
        <begin position="1"/>
        <end position="133"/>
    </location>
</feature>
<organism>
    <name type="scientific">Mesorhizobium japonicum (strain LMG 29417 / CECT 9101 / MAFF 303099)</name>
    <name type="common">Mesorhizobium loti (strain MAFF 303099)</name>
    <dbReference type="NCBI Taxonomy" id="266835"/>
    <lineage>
        <taxon>Bacteria</taxon>
        <taxon>Pseudomonadati</taxon>
        <taxon>Pseudomonadota</taxon>
        <taxon>Alphaproteobacteria</taxon>
        <taxon>Hyphomicrobiales</taxon>
        <taxon>Phyllobacteriaceae</taxon>
        <taxon>Mesorhizobium</taxon>
    </lineage>
</organism>
<evidence type="ECO:0000255" key="1">
    <source>
        <dbReference type="HAMAP-Rule" id="MF_00366"/>
    </source>
</evidence>
<protein>
    <recommendedName>
        <fullName evidence="1">DNA-directed RNA polymerase subunit omega</fullName>
        <shortName evidence="1">RNAP omega subunit</shortName>
        <ecNumber evidence="1">2.7.7.6</ecNumber>
    </recommendedName>
    <alternativeName>
        <fullName evidence="1">RNA polymerase omega subunit</fullName>
    </alternativeName>
    <alternativeName>
        <fullName evidence="1">Transcriptase subunit omega</fullName>
    </alternativeName>
</protein>
<proteinExistence type="inferred from homology"/>
<gene>
    <name evidence="1" type="primary">rpoZ</name>
    <name type="ordered locus">mlr7753</name>
</gene>
<accession>Q985B3</accession>
<sequence>MARVTVEDCIDKVDNRFELVLLAGHRARQISQGAQITVPRDNDKNPVIALREIADETLSPDDLKEDLIHSLQKHVEVDEPEADGEVIADQTGAAVAATETDDAEDNITFDRMTEEDLLAGIEGLVPPEKSDDY</sequence>